<gene>
    <name evidence="1" type="primary">nadD</name>
    <name type="ordered locus">SACE_1428</name>
</gene>
<proteinExistence type="inferred from homology"/>
<accession>A4F9M5</accession>
<comment type="function">
    <text evidence="1">Catalyzes the reversible adenylation of nicotinate mononucleotide (NaMN) to nicotinic acid adenine dinucleotide (NaAD).</text>
</comment>
<comment type="catalytic activity">
    <reaction evidence="1">
        <text>nicotinate beta-D-ribonucleotide + ATP + H(+) = deamido-NAD(+) + diphosphate</text>
        <dbReference type="Rhea" id="RHEA:22860"/>
        <dbReference type="ChEBI" id="CHEBI:15378"/>
        <dbReference type="ChEBI" id="CHEBI:30616"/>
        <dbReference type="ChEBI" id="CHEBI:33019"/>
        <dbReference type="ChEBI" id="CHEBI:57502"/>
        <dbReference type="ChEBI" id="CHEBI:58437"/>
        <dbReference type="EC" id="2.7.7.18"/>
    </reaction>
</comment>
<comment type="pathway">
    <text evidence="1">Cofactor biosynthesis; NAD(+) biosynthesis; deamido-NAD(+) from nicotinate D-ribonucleotide: step 1/1.</text>
</comment>
<comment type="similarity">
    <text evidence="1">Belongs to the NadD family.</text>
</comment>
<reference key="1">
    <citation type="journal article" date="2007" name="Nat. Biotechnol.">
        <title>Complete genome sequence of the erythromycin-producing bacterium Saccharopolyspora erythraea NRRL23338.</title>
        <authorList>
            <person name="Oliynyk M."/>
            <person name="Samborskyy M."/>
            <person name="Lester J.B."/>
            <person name="Mironenko T."/>
            <person name="Scott N."/>
            <person name="Dickens S."/>
            <person name="Haydock S.F."/>
            <person name="Leadlay P.F."/>
        </authorList>
    </citation>
    <scope>NUCLEOTIDE SEQUENCE [LARGE SCALE GENOMIC DNA]</scope>
    <source>
        <strain>ATCC 11635 / DSM 40517 / JCM 4748 / NBRC 13426 / NCIMB 8594 / NRRL 2338</strain>
    </source>
</reference>
<feature type="chain" id="PRO_0000336733" description="Probable nicotinate-nucleotide adenylyltransferase">
    <location>
        <begin position="1"/>
        <end position="212"/>
    </location>
</feature>
<evidence type="ECO:0000255" key="1">
    <source>
        <dbReference type="HAMAP-Rule" id="MF_00244"/>
    </source>
</evidence>
<protein>
    <recommendedName>
        <fullName evidence="1">Probable nicotinate-nucleotide adenylyltransferase</fullName>
        <ecNumber evidence="1">2.7.7.18</ecNumber>
    </recommendedName>
    <alternativeName>
        <fullName evidence="1">Deamido-NAD(+) diphosphorylase</fullName>
    </alternativeName>
    <alternativeName>
        <fullName evidence="1">Deamido-NAD(+) pyrophosphorylase</fullName>
    </alternativeName>
    <alternativeName>
        <fullName evidence="1">Nicotinate mononucleotide adenylyltransferase</fullName>
        <shortName evidence="1">NaMN adenylyltransferase</shortName>
    </alternativeName>
</protein>
<keyword id="KW-0067">ATP-binding</keyword>
<keyword id="KW-0520">NAD</keyword>
<keyword id="KW-0547">Nucleotide-binding</keyword>
<keyword id="KW-0548">Nucleotidyltransferase</keyword>
<keyword id="KW-0662">Pyridine nucleotide biosynthesis</keyword>
<keyword id="KW-1185">Reference proteome</keyword>
<keyword id="KW-0808">Transferase</keyword>
<dbReference type="EC" id="2.7.7.18" evidence="1"/>
<dbReference type="EMBL" id="AM420293">
    <property type="protein sequence ID" value="CAM00750.1"/>
    <property type="molecule type" value="Genomic_DNA"/>
</dbReference>
<dbReference type="RefSeq" id="WP_009947731.1">
    <property type="nucleotide sequence ID" value="NC_009142.1"/>
</dbReference>
<dbReference type="SMR" id="A4F9M5"/>
<dbReference type="STRING" id="405948.SACE_1428"/>
<dbReference type="KEGG" id="sen:SACE_1428"/>
<dbReference type="eggNOG" id="COG1057">
    <property type="taxonomic scope" value="Bacteria"/>
</dbReference>
<dbReference type="HOGENOM" id="CLU_069765_1_1_11"/>
<dbReference type="OrthoDB" id="5295945at2"/>
<dbReference type="UniPathway" id="UPA00253">
    <property type="reaction ID" value="UER00332"/>
</dbReference>
<dbReference type="Proteomes" id="UP000006728">
    <property type="component" value="Chromosome"/>
</dbReference>
<dbReference type="GO" id="GO:0005524">
    <property type="term" value="F:ATP binding"/>
    <property type="evidence" value="ECO:0007669"/>
    <property type="project" value="UniProtKB-KW"/>
</dbReference>
<dbReference type="GO" id="GO:0004515">
    <property type="term" value="F:nicotinate-nucleotide adenylyltransferase activity"/>
    <property type="evidence" value="ECO:0007669"/>
    <property type="project" value="UniProtKB-UniRule"/>
</dbReference>
<dbReference type="GO" id="GO:0009435">
    <property type="term" value="P:NAD biosynthetic process"/>
    <property type="evidence" value="ECO:0007669"/>
    <property type="project" value="UniProtKB-UniRule"/>
</dbReference>
<dbReference type="CDD" id="cd02165">
    <property type="entry name" value="NMNAT"/>
    <property type="match status" value="1"/>
</dbReference>
<dbReference type="FunFam" id="3.40.50.620:FF:000039">
    <property type="entry name" value="Probable nicotinate-nucleotide adenylyltransferase"/>
    <property type="match status" value="1"/>
</dbReference>
<dbReference type="Gene3D" id="3.40.50.620">
    <property type="entry name" value="HUPs"/>
    <property type="match status" value="1"/>
</dbReference>
<dbReference type="HAMAP" id="MF_00244">
    <property type="entry name" value="NaMN_adenylyltr"/>
    <property type="match status" value="1"/>
</dbReference>
<dbReference type="InterPro" id="IPR004821">
    <property type="entry name" value="Cyt_trans-like"/>
</dbReference>
<dbReference type="InterPro" id="IPR005248">
    <property type="entry name" value="NadD/NMNAT"/>
</dbReference>
<dbReference type="InterPro" id="IPR014729">
    <property type="entry name" value="Rossmann-like_a/b/a_fold"/>
</dbReference>
<dbReference type="NCBIfam" id="TIGR00125">
    <property type="entry name" value="cyt_tran_rel"/>
    <property type="match status" value="1"/>
</dbReference>
<dbReference type="NCBIfam" id="TIGR00482">
    <property type="entry name" value="nicotinate (nicotinamide) nucleotide adenylyltransferase"/>
    <property type="match status" value="1"/>
</dbReference>
<dbReference type="NCBIfam" id="NF000840">
    <property type="entry name" value="PRK00071.1-3"/>
    <property type="match status" value="1"/>
</dbReference>
<dbReference type="PANTHER" id="PTHR39321">
    <property type="entry name" value="NICOTINATE-NUCLEOTIDE ADENYLYLTRANSFERASE-RELATED"/>
    <property type="match status" value="1"/>
</dbReference>
<dbReference type="PANTHER" id="PTHR39321:SF3">
    <property type="entry name" value="PHOSPHOPANTETHEINE ADENYLYLTRANSFERASE"/>
    <property type="match status" value="1"/>
</dbReference>
<dbReference type="Pfam" id="PF01467">
    <property type="entry name" value="CTP_transf_like"/>
    <property type="match status" value="1"/>
</dbReference>
<dbReference type="SUPFAM" id="SSF52374">
    <property type="entry name" value="Nucleotidylyl transferase"/>
    <property type="match status" value="1"/>
</dbReference>
<organism>
    <name type="scientific">Saccharopolyspora erythraea (strain ATCC 11635 / DSM 40517 / JCM 4748 / NBRC 13426 / NCIMB 8594 / NRRL 2338)</name>
    <dbReference type="NCBI Taxonomy" id="405948"/>
    <lineage>
        <taxon>Bacteria</taxon>
        <taxon>Bacillati</taxon>
        <taxon>Actinomycetota</taxon>
        <taxon>Actinomycetes</taxon>
        <taxon>Pseudonocardiales</taxon>
        <taxon>Pseudonocardiaceae</taxon>
        <taxon>Saccharopolyspora</taxon>
    </lineage>
</organism>
<name>NADD_SACEN</name>
<sequence>MSRRRRIGVMGGTFDPIHHGHLVAASEVQAQFGLEQVIFVPTGQPWQKTHEVVSPAEDRYLMTVVATASNPRFQVSRVDIDRAGPTYTADTLADLRALYPEAELYFITGADALEQILSWHRVDELFELAHFIGVTRPGYQLAGEHLPKGAVSLVEIPAMAISSTGCRQRVRAGLPVWYLVPDGIVQYIAKRGLYRGEDDSAGVEWGPRPSGT</sequence>